<keyword id="KW-1185">Reference proteome</keyword>
<keyword id="KW-0687">Ribonucleoprotein</keyword>
<keyword id="KW-0689">Ribosomal protein</keyword>
<evidence type="ECO:0000255" key="1">
    <source>
        <dbReference type="HAMAP-Rule" id="MF_00539"/>
    </source>
</evidence>
<evidence type="ECO:0000256" key="2">
    <source>
        <dbReference type="SAM" id="MobiDB-lite"/>
    </source>
</evidence>
<evidence type="ECO:0000305" key="3"/>
<reference key="1">
    <citation type="journal article" date="2009" name="Genome Res.">
        <title>Complete genome of the cellulolytic thermophile Acidothermus cellulolyticus 11B provides insights into its ecophysiological and evolutionary adaptations.</title>
        <authorList>
            <person name="Barabote R.D."/>
            <person name="Xie G."/>
            <person name="Leu D.H."/>
            <person name="Normand P."/>
            <person name="Necsulea A."/>
            <person name="Daubin V."/>
            <person name="Medigue C."/>
            <person name="Adney W.S."/>
            <person name="Xu X.C."/>
            <person name="Lapidus A."/>
            <person name="Parales R.E."/>
            <person name="Detter C."/>
            <person name="Pujic P."/>
            <person name="Bruce D."/>
            <person name="Lavire C."/>
            <person name="Challacombe J.F."/>
            <person name="Brettin T.S."/>
            <person name="Berry A.M."/>
        </authorList>
    </citation>
    <scope>NUCLEOTIDE SEQUENCE [LARGE SCALE GENOMIC DNA]</scope>
    <source>
        <strain>ATCC 43068 / DSM 8971 / 11B</strain>
    </source>
</reference>
<protein>
    <recommendedName>
        <fullName evidence="1">Large ribosomal subunit protein bL27</fullName>
    </recommendedName>
    <alternativeName>
        <fullName evidence="3">50S ribosomal protein L27</fullName>
    </alternativeName>
</protein>
<proteinExistence type="inferred from homology"/>
<gene>
    <name evidence="1" type="primary">rpmA</name>
    <name type="ordered locus">Acel_0757</name>
</gene>
<sequence>MAHKKGASSSRNGRDSTSKRLGVKRFGGQFVHAGEILVRQRGTRFHPGSGVGRGGDDTLFALVSGAVTFGTARGRRVVSVVPAQPAATPAQPAATGS</sequence>
<dbReference type="EMBL" id="CP000481">
    <property type="protein sequence ID" value="ABK52530.1"/>
    <property type="molecule type" value="Genomic_DNA"/>
</dbReference>
<dbReference type="RefSeq" id="WP_011719593.1">
    <property type="nucleotide sequence ID" value="NC_008578.1"/>
</dbReference>
<dbReference type="SMR" id="A0LSX0"/>
<dbReference type="FunCoup" id="A0LSX0">
    <property type="interactions" value="192"/>
</dbReference>
<dbReference type="STRING" id="351607.Acel_0757"/>
<dbReference type="KEGG" id="ace:Acel_0757"/>
<dbReference type="eggNOG" id="COG0211">
    <property type="taxonomic scope" value="Bacteria"/>
</dbReference>
<dbReference type="HOGENOM" id="CLU_095424_4_0_11"/>
<dbReference type="InParanoid" id="A0LSX0"/>
<dbReference type="OrthoDB" id="9803474at2"/>
<dbReference type="Proteomes" id="UP000008221">
    <property type="component" value="Chromosome"/>
</dbReference>
<dbReference type="GO" id="GO:0022625">
    <property type="term" value="C:cytosolic large ribosomal subunit"/>
    <property type="evidence" value="ECO:0007669"/>
    <property type="project" value="TreeGrafter"/>
</dbReference>
<dbReference type="GO" id="GO:0003735">
    <property type="term" value="F:structural constituent of ribosome"/>
    <property type="evidence" value="ECO:0007669"/>
    <property type="project" value="InterPro"/>
</dbReference>
<dbReference type="GO" id="GO:0006412">
    <property type="term" value="P:translation"/>
    <property type="evidence" value="ECO:0007669"/>
    <property type="project" value="UniProtKB-UniRule"/>
</dbReference>
<dbReference type="FunFam" id="2.40.50.100:FF:000020">
    <property type="entry name" value="50S ribosomal protein L27"/>
    <property type="match status" value="1"/>
</dbReference>
<dbReference type="Gene3D" id="2.40.50.100">
    <property type="match status" value="1"/>
</dbReference>
<dbReference type="HAMAP" id="MF_00539">
    <property type="entry name" value="Ribosomal_bL27"/>
    <property type="match status" value="1"/>
</dbReference>
<dbReference type="InterPro" id="IPR001684">
    <property type="entry name" value="Ribosomal_bL27"/>
</dbReference>
<dbReference type="InterPro" id="IPR018261">
    <property type="entry name" value="Ribosomal_bL27_CS"/>
</dbReference>
<dbReference type="NCBIfam" id="TIGR00062">
    <property type="entry name" value="L27"/>
    <property type="match status" value="1"/>
</dbReference>
<dbReference type="PANTHER" id="PTHR15893:SF0">
    <property type="entry name" value="LARGE RIBOSOMAL SUBUNIT PROTEIN BL27M"/>
    <property type="match status" value="1"/>
</dbReference>
<dbReference type="PANTHER" id="PTHR15893">
    <property type="entry name" value="RIBOSOMAL PROTEIN L27"/>
    <property type="match status" value="1"/>
</dbReference>
<dbReference type="Pfam" id="PF01016">
    <property type="entry name" value="Ribosomal_L27"/>
    <property type="match status" value="1"/>
</dbReference>
<dbReference type="PRINTS" id="PR00063">
    <property type="entry name" value="RIBOSOMALL27"/>
</dbReference>
<dbReference type="SUPFAM" id="SSF110324">
    <property type="entry name" value="Ribosomal L27 protein-like"/>
    <property type="match status" value="1"/>
</dbReference>
<dbReference type="PROSITE" id="PS00831">
    <property type="entry name" value="RIBOSOMAL_L27"/>
    <property type="match status" value="1"/>
</dbReference>
<name>RL27_ACIC1</name>
<comment type="similarity">
    <text evidence="1">Belongs to the bacterial ribosomal protein bL27 family.</text>
</comment>
<organism>
    <name type="scientific">Acidothermus cellulolyticus (strain ATCC 43068 / DSM 8971 / 11B)</name>
    <dbReference type="NCBI Taxonomy" id="351607"/>
    <lineage>
        <taxon>Bacteria</taxon>
        <taxon>Bacillati</taxon>
        <taxon>Actinomycetota</taxon>
        <taxon>Actinomycetes</taxon>
        <taxon>Acidothermales</taxon>
        <taxon>Acidothermaceae</taxon>
        <taxon>Acidothermus</taxon>
    </lineage>
</organism>
<accession>A0LSX0</accession>
<feature type="chain" id="PRO_1000017395" description="Large ribosomal subunit protein bL27">
    <location>
        <begin position="1"/>
        <end position="97"/>
    </location>
</feature>
<feature type="region of interest" description="Disordered" evidence="2">
    <location>
        <begin position="1"/>
        <end position="23"/>
    </location>
</feature>